<reference key="1">
    <citation type="journal article" date="2000" name="Nature">
        <title>Sequence and analysis of chromosome 5 of the plant Arabidopsis thaliana.</title>
        <authorList>
            <person name="Tabata S."/>
            <person name="Kaneko T."/>
            <person name="Nakamura Y."/>
            <person name="Kotani H."/>
            <person name="Kato T."/>
            <person name="Asamizu E."/>
            <person name="Miyajima N."/>
            <person name="Sasamoto S."/>
            <person name="Kimura T."/>
            <person name="Hosouchi T."/>
            <person name="Kawashima K."/>
            <person name="Kohara M."/>
            <person name="Matsumoto M."/>
            <person name="Matsuno A."/>
            <person name="Muraki A."/>
            <person name="Nakayama S."/>
            <person name="Nakazaki N."/>
            <person name="Naruo K."/>
            <person name="Okumura S."/>
            <person name="Shinpo S."/>
            <person name="Takeuchi C."/>
            <person name="Wada T."/>
            <person name="Watanabe A."/>
            <person name="Yamada M."/>
            <person name="Yasuda M."/>
            <person name="Sato S."/>
            <person name="de la Bastide M."/>
            <person name="Huang E."/>
            <person name="Spiegel L."/>
            <person name="Gnoj L."/>
            <person name="O'Shaughnessy A."/>
            <person name="Preston R."/>
            <person name="Habermann K."/>
            <person name="Murray J."/>
            <person name="Johnson D."/>
            <person name="Rohlfing T."/>
            <person name="Nelson J."/>
            <person name="Stoneking T."/>
            <person name="Pepin K."/>
            <person name="Spieth J."/>
            <person name="Sekhon M."/>
            <person name="Armstrong J."/>
            <person name="Becker M."/>
            <person name="Belter E."/>
            <person name="Cordum H."/>
            <person name="Cordes M."/>
            <person name="Courtney L."/>
            <person name="Courtney W."/>
            <person name="Dante M."/>
            <person name="Du H."/>
            <person name="Edwards J."/>
            <person name="Fryman J."/>
            <person name="Haakensen B."/>
            <person name="Lamar E."/>
            <person name="Latreille P."/>
            <person name="Leonard S."/>
            <person name="Meyer R."/>
            <person name="Mulvaney E."/>
            <person name="Ozersky P."/>
            <person name="Riley A."/>
            <person name="Strowmatt C."/>
            <person name="Wagner-McPherson C."/>
            <person name="Wollam A."/>
            <person name="Yoakum M."/>
            <person name="Bell M."/>
            <person name="Dedhia N."/>
            <person name="Parnell L."/>
            <person name="Shah R."/>
            <person name="Rodriguez M."/>
            <person name="Hoon See L."/>
            <person name="Vil D."/>
            <person name="Baker J."/>
            <person name="Kirchoff K."/>
            <person name="Toth K."/>
            <person name="King L."/>
            <person name="Bahret A."/>
            <person name="Miller B."/>
            <person name="Marra M.A."/>
            <person name="Martienssen R."/>
            <person name="McCombie W.R."/>
            <person name="Wilson R.K."/>
            <person name="Murphy G."/>
            <person name="Bancroft I."/>
            <person name="Volckaert G."/>
            <person name="Wambutt R."/>
            <person name="Duesterhoeft A."/>
            <person name="Stiekema W."/>
            <person name="Pohl T."/>
            <person name="Entian K.-D."/>
            <person name="Terryn N."/>
            <person name="Hartley N."/>
            <person name="Bent E."/>
            <person name="Johnson S."/>
            <person name="Langham S.-A."/>
            <person name="McCullagh B."/>
            <person name="Robben J."/>
            <person name="Grymonprez B."/>
            <person name="Zimmermann W."/>
            <person name="Ramsperger U."/>
            <person name="Wedler H."/>
            <person name="Balke K."/>
            <person name="Wedler E."/>
            <person name="Peters S."/>
            <person name="van Staveren M."/>
            <person name="Dirkse W."/>
            <person name="Mooijman P."/>
            <person name="Klein Lankhorst R."/>
            <person name="Weitzenegger T."/>
            <person name="Bothe G."/>
            <person name="Rose M."/>
            <person name="Hauf J."/>
            <person name="Berneiser S."/>
            <person name="Hempel S."/>
            <person name="Feldpausch M."/>
            <person name="Lamberth S."/>
            <person name="Villarroel R."/>
            <person name="Gielen J."/>
            <person name="Ardiles W."/>
            <person name="Bents O."/>
            <person name="Lemcke K."/>
            <person name="Kolesov G."/>
            <person name="Mayer K.F.X."/>
            <person name="Rudd S."/>
            <person name="Schoof H."/>
            <person name="Schueller C."/>
            <person name="Zaccaria P."/>
            <person name="Mewes H.-W."/>
            <person name="Bevan M."/>
            <person name="Fransz P.F."/>
        </authorList>
    </citation>
    <scope>NUCLEOTIDE SEQUENCE [LARGE SCALE GENOMIC DNA]</scope>
    <source>
        <strain>cv. Columbia</strain>
    </source>
</reference>
<reference key="2">
    <citation type="journal article" date="2017" name="Plant J.">
        <title>Araport11: a complete reannotation of the Arabidopsis thaliana reference genome.</title>
        <authorList>
            <person name="Cheng C.Y."/>
            <person name="Krishnakumar V."/>
            <person name="Chan A.P."/>
            <person name="Thibaud-Nissen F."/>
            <person name="Schobel S."/>
            <person name="Town C.D."/>
        </authorList>
    </citation>
    <scope>GENOME REANNOTATION</scope>
    <source>
        <strain>cv. Columbia</strain>
    </source>
</reference>
<reference key="3">
    <citation type="journal article" date="2002" name="Science">
        <title>Functional annotation of a full-length Arabidopsis cDNA collection.</title>
        <authorList>
            <person name="Seki M."/>
            <person name="Narusaka M."/>
            <person name="Kamiya A."/>
            <person name="Ishida J."/>
            <person name="Satou M."/>
            <person name="Sakurai T."/>
            <person name="Nakajima M."/>
            <person name="Enju A."/>
            <person name="Akiyama K."/>
            <person name="Oono Y."/>
            <person name="Muramatsu M."/>
            <person name="Hayashizaki Y."/>
            <person name="Kawai J."/>
            <person name="Carninci P."/>
            <person name="Itoh M."/>
            <person name="Ishii Y."/>
            <person name="Arakawa T."/>
            <person name="Shibata K."/>
            <person name="Shinagawa A."/>
            <person name="Shinozaki K."/>
        </authorList>
    </citation>
    <scope>NUCLEOTIDE SEQUENCE [LARGE SCALE MRNA] OF 1-551</scope>
    <source>
        <strain>cv. Columbia</strain>
    </source>
</reference>
<reference key="4">
    <citation type="journal article" date="2009" name="Plant Physiol.">
        <title>Large-scale Arabidopsis phosphoproteome profiling reveals novel chloroplast kinase substrates and phosphorylation networks.</title>
        <authorList>
            <person name="Reiland S."/>
            <person name="Messerli G."/>
            <person name="Baerenfaller K."/>
            <person name="Gerrits B."/>
            <person name="Endler A."/>
            <person name="Grossmann J."/>
            <person name="Gruissem W."/>
            <person name="Baginsky S."/>
        </authorList>
    </citation>
    <scope>PHOSPHORYLATION [LARGE SCALE ANALYSIS] AT SER-1023</scope>
    <scope>IDENTIFICATION BY MASS SPECTROMETRY [LARGE SCALE ANALYSIS]</scope>
</reference>
<reference key="5">
    <citation type="journal article" date="2010" name="J. Mol. Biol.">
        <title>PAH-domain-specific interactions of the Arabidopsis transcription coregulator SIN3-LIKE1 (SNL1) with telomere-binding protein 1 and ALWAYS EARLY2 Myb-DNA binding factors.</title>
        <authorList>
            <person name="Bowen A.J."/>
            <person name="Gonzalez D."/>
            <person name="Mullins J.G."/>
            <person name="Bhatt A.M."/>
            <person name="Martinez A."/>
            <person name="Conlan R.S."/>
        </authorList>
    </citation>
    <scope>GENE FAMILY</scope>
    <scope>NOMENCLATURE</scope>
</reference>
<organism>
    <name type="scientific">Arabidopsis thaliana</name>
    <name type="common">Mouse-ear cress</name>
    <dbReference type="NCBI Taxonomy" id="3702"/>
    <lineage>
        <taxon>Eukaryota</taxon>
        <taxon>Viridiplantae</taxon>
        <taxon>Streptophyta</taxon>
        <taxon>Embryophyta</taxon>
        <taxon>Tracheophyta</taxon>
        <taxon>Spermatophyta</taxon>
        <taxon>Magnoliopsida</taxon>
        <taxon>eudicotyledons</taxon>
        <taxon>Gunneridae</taxon>
        <taxon>Pentapetalae</taxon>
        <taxon>rosids</taxon>
        <taxon>malvids</taxon>
        <taxon>Brassicales</taxon>
        <taxon>Brassicaceae</taxon>
        <taxon>Camelineae</taxon>
        <taxon>Arabidopsis</taxon>
    </lineage>
</organism>
<protein>
    <recommendedName>
        <fullName>Paired amphipathic helix protein Sin3-like 2</fullName>
    </recommendedName>
</protein>
<dbReference type="EMBL" id="AL391146">
    <property type="protein sequence ID" value="CAC01821.1"/>
    <property type="status" value="ALT_SEQ"/>
    <property type="molecule type" value="Genomic_DNA"/>
</dbReference>
<dbReference type="EMBL" id="CP002688">
    <property type="protein sequence ID" value="AED92105.1"/>
    <property type="molecule type" value="Genomic_DNA"/>
</dbReference>
<dbReference type="EMBL" id="AK118953">
    <property type="protein sequence ID" value="BAC43533.1"/>
    <property type="status" value="ALT_SEQ"/>
    <property type="molecule type" value="mRNA"/>
</dbReference>
<dbReference type="PIR" id="T51447">
    <property type="entry name" value="T51447"/>
</dbReference>
<dbReference type="RefSeq" id="NP_197006.2">
    <molecule id="Q9LFQ3-1"/>
    <property type="nucleotide sequence ID" value="NM_121506.4"/>
</dbReference>
<dbReference type="SMR" id="Q9LFQ3"/>
<dbReference type="BioGRID" id="16631">
    <property type="interactions" value="3"/>
</dbReference>
<dbReference type="FunCoup" id="Q9LFQ3">
    <property type="interactions" value="4190"/>
</dbReference>
<dbReference type="IntAct" id="Q9LFQ3">
    <property type="interactions" value="1"/>
</dbReference>
<dbReference type="STRING" id="3702.Q9LFQ3"/>
<dbReference type="iPTMnet" id="Q9LFQ3"/>
<dbReference type="PaxDb" id="3702-AT5G15020.1"/>
<dbReference type="ProteomicsDB" id="232644">
    <molecule id="Q9LFQ3-1"/>
</dbReference>
<dbReference type="EnsemblPlants" id="AT5G15020.1">
    <molecule id="Q9LFQ3-1"/>
    <property type="protein sequence ID" value="AT5G15020.1"/>
    <property type="gene ID" value="AT5G15020"/>
</dbReference>
<dbReference type="GeneID" id="831354"/>
<dbReference type="Gramene" id="AT5G15020.1">
    <molecule id="Q9LFQ3-1"/>
    <property type="protein sequence ID" value="AT5G15020.1"/>
    <property type="gene ID" value="AT5G15020"/>
</dbReference>
<dbReference type="KEGG" id="ath:AT5G15020"/>
<dbReference type="Araport" id="AT5G15020"/>
<dbReference type="TAIR" id="AT5G15020">
    <property type="gene designation" value="SNL2"/>
</dbReference>
<dbReference type="eggNOG" id="KOG4204">
    <property type="taxonomic scope" value="Eukaryota"/>
</dbReference>
<dbReference type="InParanoid" id="Q9LFQ3"/>
<dbReference type="PhylomeDB" id="Q9LFQ3"/>
<dbReference type="PRO" id="PR:Q9LFQ3"/>
<dbReference type="Proteomes" id="UP000006548">
    <property type="component" value="Chromosome 5"/>
</dbReference>
<dbReference type="ExpressionAtlas" id="Q9LFQ3">
    <property type="expression patterns" value="baseline and differential"/>
</dbReference>
<dbReference type="GO" id="GO:0005634">
    <property type="term" value="C:nucleus"/>
    <property type="evidence" value="ECO:0007669"/>
    <property type="project" value="UniProtKB-SubCell"/>
</dbReference>
<dbReference type="GO" id="GO:0003714">
    <property type="term" value="F:transcription corepressor activity"/>
    <property type="evidence" value="ECO:0007669"/>
    <property type="project" value="InterPro"/>
</dbReference>
<dbReference type="FunFam" id="1.20.1160.11:FF:000002">
    <property type="entry name" value="Paired amphipathic helix protein SIN3"/>
    <property type="match status" value="1"/>
</dbReference>
<dbReference type="FunFam" id="1.20.1160.11:FF:000001">
    <property type="entry name" value="Paired amphipathic helix protein Sin3"/>
    <property type="match status" value="1"/>
</dbReference>
<dbReference type="FunFam" id="1.20.1160.11:FF:000003">
    <property type="entry name" value="Paired amphipathic helix SIN3-like protein"/>
    <property type="match status" value="1"/>
</dbReference>
<dbReference type="Gene3D" id="1.20.1160.11">
    <property type="entry name" value="Paired amphipathic helix"/>
    <property type="match status" value="3"/>
</dbReference>
<dbReference type="InterPro" id="IPR013194">
    <property type="entry name" value="HDAC_interact_dom"/>
</dbReference>
<dbReference type="InterPro" id="IPR003822">
    <property type="entry name" value="PAH"/>
</dbReference>
<dbReference type="InterPro" id="IPR036600">
    <property type="entry name" value="PAH_sf"/>
</dbReference>
<dbReference type="InterPro" id="IPR039774">
    <property type="entry name" value="Sin3-like"/>
</dbReference>
<dbReference type="InterPro" id="IPR031693">
    <property type="entry name" value="Sin3_C"/>
</dbReference>
<dbReference type="PANTHER" id="PTHR12346:SF8">
    <property type="entry name" value="PAIRED AMPHIPATHIC HELIX PROTEIN SIN3-LIKE 2"/>
    <property type="match status" value="1"/>
</dbReference>
<dbReference type="PANTHER" id="PTHR12346">
    <property type="entry name" value="SIN3B-RELATED"/>
    <property type="match status" value="1"/>
</dbReference>
<dbReference type="Pfam" id="PF02671">
    <property type="entry name" value="PAH"/>
    <property type="match status" value="3"/>
</dbReference>
<dbReference type="Pfam" id="PF08295">
    <property type="entry name" value="Sin3_corepress"/>
    <property type="match status" value="1"/>
</dbReference>
<dbReference type="Pfam" id="PF16879">
    <property type="entry name" value="Sin3a_C"/>
    <property type="match status" value="1"/>
</dbReference>
<dbReference type="SMART" id="SM00761">
    <property type="entry name" value="HDAC_interact"/>
    <property type="match status" value="1"/>
</dbReference>
<dbReference type="SUPFAM" id="SSF47762">
    <property type="entry name" value="PAH2 domain"/>
    <property type="match status" value="3"/>
</dbReference>
<dbReference type="PROSITE" id="PS51477">
    <property type="entry name" value="PAH"/>
    <property type="match status" value="3"/>
</dbReference>
<keyword id="KW-0025">Alternative splicing</keyword>
<keyword id="KW-0539">Nucleus</keyword>
<keyword id="KW-0597">Phosphoprotein</keyword>
<keyword id="KW-1185">Reference proteome</keyword>
<keyword id="KW-0677">Repeat</keyword>
<keyword id="KW-0678">Repressor</keyword>
<keyword id="KW-0804">Transcription</keyword>
<keyword id="KW-0805">Transcription regulation</keyword>
<comment type="function">
    <text evidence="1">Acts as a transcriptional repressor. Plays roles in regulating gene expression and genome stability (By similarity).</text>
</comment>
<comment type="subcellular location">
    <subcellularLocation>
        <location evidence="2">Nucleus</location>
    </subcellularLocation>
</comment>
<comment type="alternative products">
    <event type="alternative splicing"/>
    <isoform>
        <id>Q9LFQ3-1</id>
        <name>1</name>
        <sequence type="displayed"/>
    </isoform>
    <text>A number of isoforms are produced. According to EST sequences.</text>
</comment>
<comment type="sequence caution" evidence="4">
    <conflict type="miscellaneous discrepancy">
        <sequence resource="EMBL-CDS" id="BAC43533"/>
    </conflict>
    <text>Intron retention.</text>
</comment>
<comment type="sequence caution" evidence="4">
    <conflict type="erroneous gene model prediction">
        <sequence resource="EMBL-CDS" id="CAC01821"/>
    </conflict>
</comment>
<name>SNL2_ARATH</name>
<evidence type="ECO:0000250" key="1"/>
<evidence type="ECO:0000255" key="2">
    <source>
        <dbReference type="PROSITE-ProRule" id="PRU00810"/>
    </source>
</evidence>
<evidence type="ECO:0000256" key="3">
    <source>
        <dbReference type="SAM" id="MobiDB-lite"/>
    </source>
</evidence>
<evidence type="ECO:0000305" key="4"/>
<evidence type="ECO:0007744" key="5">
    <source>
    </source>
</evidence>
<gene>
    <name type="primary">SNL2</name>
    <name type="ordered locus">At5g15020</name>
    <name type="ORF">F2G14.140</name>
</gene>
<accession>Q9LFQ3</accession>
<accession>Q8GWB6</accession>
<sequence>MKRIRDDIYATGSQFKRPLGSSRGESYEQSPITGGGSIGEGGINTQKLTTDDALTYLKEVKEMFQDQRDKYDMFLEVMKDFKAQKTDTSGVISRVKELFKGHNNLIFGFNTFLPKGFEITLDDVEAPSKKTVEFEEAISFVNKIKTRFQHNELVYKSFLEILNMYRKDNKDITEVYNEVSTLFEDHSDLLEEFTRFLPDSLAPHTEAQLLRSQAQRYDDRGSGPPLVRRMFMEKDRRRERTVASRGDRDHSVDRSDLNDDKSMVKMHRDQRKRVDKDNRERRSRDLEDGEAEQDNLQHFSEKRKSSRRMEGFEAYSGPASHSEKNNLKSMYNQAFLFCEKVKERLCSQDDYQAFLKCLNMFSNGIIQRKDLQNLVSDVLGKFPDLMDEFNQFFERCESIDGFQHLAGVMSKKSLGSEENLSRSVKGEEKDREHKRDVEAAKEKERSKDKYMGKSIQELDLSDCERCTPSYRLLPPDYPIPSVRHRQKSGAAVLNDHWVSVTSGSEDYSFKHMRRNQYEESLFRCEDDRFELDMLLESVGSAAKSAEELLNIIIDKKISFEGSFRIEDHFTALNLRCIERLYGDHGLDVTDLIRKNPAAALPVILTRLKQKQDEWTKCREGFNVVWADVYAKNHYKSLDHRSFYFKQQDSKNLSAKALVSEVKDLKEKSQKEDDVVLSISAGYRQPIIPHLEYDYLDRAIHEDLFKLVQFSCEEICSTKEQTGKVLKLWANFLELMLDVAPRAKGSDSVEDVVETQHQRAFTSGEANESSDAISLVSRQLKFATNGDVHASSGVSKHGETGLLNRDSSGKENLKDGDLANKDVATCAEKPQKDQEIGNGAAKRSGDVDERVATSSSSFPSGVENNNGKVGSRDSSGSRGILSKPSEAIDKVDSIQHTQGVDIGRIIVLGNGLQSDTSKANSNYDESGGPSKIEKEEGELSPVGDSEDNFVVYEDRELKATAKTEHSVEAEGENDEDADDEDGDDASEAGEDASGTESIGDECSQDDNGVEEEGEHDEIDGKAESEGEAEGMESHLIEDKGLFPSSERVLLSVKPLSKHIAAAALVDEKKKDSRVFYGNDDFYVLFRLHRVSAIDSYDLLSHILYERILSAKTYCSGSEMKLRNTKDTCSPDPYARFMNALFSLLNGSAENSKFEDECRAIIGNQSYVLFTLEKLIYKLVKQLQAVVADDMDNKLLQLYEYENSRRPGRVFDSVYYENARILLHEENIYRLECSSSPSRLSIQLMDNIIEKPDAYAVSMEPTFTSYLQNEFLSNSSGKKELQDIVLQRNMRGYNGLDDLAVACKAMEGVQVINGLECKMSCSSYKISYVLDTEDFFHRKKKQKKSNNLSLAKLSQNRIARFHKFLSASR</sequence>
<feature type="chain" id="PRO_0000394041" description="Paired amphipathic helix protein Sin3-like 2">
    <location>
        <begin position="1"/>
        <end position="1367"/>
    </location>
</feature>
<feature type="domain" description="PAH 1" evidence="2">
    <location>
        <begin position="46"/>
        <end position="116"/>
    </location>
</feature>
<feature type="domain" description="PAH 2" evidence="2">
    <location>
        <begin position="130"/>
        <end position="200"/>
    </location>
</feature>
<feature type="domain" description="PAH 3" evidence="2">
    <location>
        <begin position="327"/>
        <end position="396"/>
    </location>
</feature>
<feature type="region of interest" description="Disordered" evidence="3">
    <location>
        <begin position="14"/>
        <end position="44"/>
    </location>
</feature>
<feature type="region of interest" description="Disordered" evidence="3">
    <location>
        <begin position="212"/>
        <end position="322"/>
    </location>
</feature>
<feature type="region of interest" description="Disordered" evidence="3">
    <location>
        <begin position="417"/>
        <end position="446"/>
    </location>
</feature>
<feature type="region of interest" description="Disordered" evidence="3">
    <location>
        <begin position="786"/>
        <end position="883"/>
    </location>
</feature>
<feature type="region of interest" description="Disordered" evidence="3">
    <location>
        <begin position="912"/>
        <end position="946"/>
    </location>
</feature>
<feature type="region of interest" description="Disordered" evidence="3">
    <location>
        <begin position="958"/>
        <end position="1031"/>
    </location>
</feature>
<feature type="compositionally biased region" description="Gly residues" evidence="3">
    <location>
        <begin position="33"/>
        <end position="42"/>
    </location>
</feature>
<feature type="compositionally biased region" description="Basic and acidic residues" evidence="3">
    <location>
        <begin position="230"/>
        <end position="286"/>
    </location>
</feature>
<feature type="compositionally biased region" description="Basic and acidic residues" evidence="3">
    <location>
        <begin position="299"/>
        <end position="311"/>
    </location>
</feature>
<feature type="compositionally biased region" description="Basic and acidic residues" evidence="3">
    <location>
        <begin position="424"/>
        <end position="446"/>
    </location>
</feature>
<feature type="compositionally biased region" description="Basic and acidic residues" evidence="3">
    <location>
        <begin position="806"/>
        <end position="819"/>
    </location>
</feature>
<feature type="compositionally biased region" description="Polar residues" evidence="3">
    <location>
        <begin position="851"/>
        <end position="876"/>
    </location>
</feature>
<feature type="compositionally biased region" description="Polar residues" evidence="3">
    <location>
        <begin position="912"/>
        <end position="923"/>
    </location>
</feature>
<feature type="compositionally biased region" description="Basic and acidic residues" evidence="3">
    <location>
        <begin position="958"/>
        <end position="967"/>
    </location>
</feature>
<feature type="compositionally biased region" description="Acidic residues" evidence="3">
    <location>
        <begin position="968"/>
        <end position="989"/>
    </location>
</feature>
<feature type="compositionally biased region" description="Acidic residues" evidence="3">
    <location>
        <begin position="997"/>
        <end position="1016"/>
    </location>
</feature>
<feature type="modified residue" description="Phosphoserine" evidence="5">
    <location>
        <position position="1023"/>
    </location>
</feature>
<proteinExistence type="evidence at protein level"/>